<gene>
    <name type="ordered locus">SSP1352</name>
</gene>
<evidence type="ECO:0000305" key="1"/>
<comment type="similarity">
    <text evidence="1">Belongs to the peptidase M20 family.</text>
</comment>
<accession>Q49XK0</accession>
<keyword id="KW-0378">Hydrolase</keyword>
<keyword id="KW-1185">Reference proteome</keyword>
<protein>
    <recommendedName>
        <fullName>Uncharacterized hydrolase SSP1352</fullName>
        <ecNumber>3.-.-.-</ecNumber>
    </recommendedName>
</protein>
<organism>
    <name type="scientific">Staphylococcus saprophyticus subsp. saprophyticus (strain ATCC 15305 / DSM 20229 / NCIMB 8711 / NCTC 7292 / S-41)</name>
    <dbReference type="NCBI Taxonomy" id="342451"/>
    <lineage>
        <taxon>Bacteria</taxon>
        <taxon>Bacillati</taxon>
        <taxon>Bacillota</taxon>
        <taxon>Bacilli</taxon>
        <taxon>Bacillales</taxon>
        <taxon>Staphylococcaceae</taxon>
        <taxon>Staphylococcus</taxon>
    </lineage>
</organism>
<sequence length="385" mass="43857">MTELEFVTEHRRYLHKHPELSLHEYETTKYIAHFLDDLGVPYERPLDTGVIAYLSGNSTHTIAYRADIDALPIYEENNVSYRSEVDHVMHACGHDGHTTALMLFVKRCKNLADKGELPQNIVFIFQPAEETGGGANRLIRAGAFEKYPIEAVFGIHVMPFENEGRVVIRDEEITASATEYRFYLHGLSSHVADKEQGHSCGEALQHVLTQVGQIQQYHLNGLKRNIVHMGHFEAGEAINTVPSNGYLEGTIRTYDVKDLEIVKQQMTKISESVKLLFNVECEVKFEEGYPPTFNDPQLRKHVENGLVNAEFEVIDKPTPYLFGEDFSFYSQIAPSYFVFVGVRDEAKGYVTGLHTSHLNFNESILIRIADYYEQILKSYSEVQSQ</sequence>
<proteinExistence type="inferred from homology"/>
<feature type="chain" id="PRO_0000298630" description="Uncharacterized hydrolase SSP1352">
    <location>
        <begin position="1"/>
        <end position="385"/>
    </location>
</feature>
<name>Y1352_STAS1</name>
<reference key="1">
    <citation type="journal article" date="2005" name="Proc. Natl. Acad. Sci. U.S.A.">
        <title>Whole genome sequence of Staphylococcus saprophyticus reveals the pathogenesis of uncomplicated urinary tract infection.</title>
        <authorList>
            <person name="Kuroda M."/>
            <person name="Yamashita A."/>
            <person name="Hirakawa H."/>
            <person name="Kumano M."/>
            <person name="Morikawa K."/>
            <person name="Higashide M."/>
            <person name="Maruyama A."/>
            <person name="Inose Y."/>
            <person name="Matoba K."/>
            <person name="Toh H."/>
            <person name="Kuhara S."/>
            <person name="Hattori M."/>
            <person name="Ohta T."/>
        </authorList>
    </citation>
    <scope>NUCLEOTIDE SEQUENCE [LARGE SCALE GENOMIC DNA]</scope>
    <source>
        <strain>ATCC 15305 / DSM 20229 / NCIMB 8711 / NCTC 7292 / S-41</strain>
    </source>
</reference>
<dbReference type="EC" id="3.-.-.-"/>
<dbReference type="EMBL" id="AP008934">
    <property type="protein sequence ID" value="BAE18497.1"/>
    <property type="molecule type" value="Genomic_DNA"/>
</dbReference>
<dbReference type="RefSeq" id="WP_011303131.1">
    <property type="nucleotide sequence ID" value="NZ_MTGA01000038.1"/>
</dbReference>
<dbReference type="SMR" id="Q49XK0"/>
<dbReference type="DNASU" id="3616690"/>
<dbReference type="GeneID" id="3616690"/>
<dbReference type="KEGG" id="ssp:SSP1352"/>
<dbReference type="PATRIC" id="fig|342451.11.peg.1356"/>
<dbReference type="eggNOG" id="COG1473">
    <property type="taxonomic scope" value="Bacteria"/>
</dbReference>
<dbReference type="HOGENOM" id="CLU_023257_1_0_9"/>
<dbReference type="OrthoDB" id="9776731at2"/>
<dbReference type="Proteomes" id="UP000006371">
    <property type="component" value="Chromosome"/>
</dbReference>
<dbReference type="GO" id="GO:0016787">
    <property type="term" value="F:hydrolase activity"/>
    <property type="evidence" value="ECO:0007669"/>
    <property type="project" value="UniProtKB-KW"/>
</dbReference>
<dbReference type="Gene3D" id="3.30.70.360">
    <property type="match status" value="1"/>
</dbReference>
<dbReference type="Gene3D" id="3.40.630.10">
    <property type="entry name" value="Zn peptidases"/>
    <property type="match status" value="1"/>
</dbReference>
<dbReference type="InterPro" id="IPR017439">
    <property type="entry name" value="Amidohydrolase"/>
</dbReference>
<dbReference type="InterPro" id="IPR036264">
    <property type="entry name" value="Bact_exopeptidase_dim_dom"/>
</dbReference>
<dbReference type="InterPro" id="IPR002933">
    <property type="entry name" value="Peptidase_M20"/>
</dbReference>
<dbReference type="InterPro" id="IPR011650">
    <property type="entry name" value="Peptidase_M20_dimer"/>
</dbReference>
<dbReference type="NCBIfam" id="TIGR01891">
    <property type="entry name" value="amidohydrolases"/>
    <property type="match status" value="1"/>
</dbReference>
<dbReference type="PANTHER" id="PTHR11014:SF63">
    <property type="entry name" value="METALLOPEPTIDASE, PUTATIVE (AFU_ORTHOLOGUE AFUA_6G09600)-RELATED"/>
    <property type="match status" value="1"/>
</dbReference>
<dbReference type="PANTHER" id="PTHR11014">
    <property type="entry name" value="PEPTIDASE M20 FAMILY MEMBER"/>
    <property type="match status" value="1"/>
</dbReference>
<dbReference type="Pfam" id="PF07687">
    <property type="entry name" value="M20_dimer"/>
    <property type="match status" value="1"/>
</dbReference>
<dbReference type="Pfam" id="PF01546">
    <property type="entry name" value="Peptidase_M20"/>
    <property type="match status" value="1"/>
</dbReference>
<dbReference type="PIRSF" id="PIRSF005962">
    <property type="entry name" value="Pept_M20D_amidohydro"/>
    <property type="match status" value="1"/>
</dbReference>
<dbReference type="SUPFAM" id="SSF55031">
    <property type="entry name" value="Bacterial exopeptidase dimerisation domain"/>
    <property type="match status" value="1"/>
</dbReference>
<dbReference type="SUPFAM" id="SSF53187">
    <property type="entry name" value="Zn-dependent exopeptidases"/>
    <property type="match status" value="1"/>
</dbReference>